<feature type="chain" id="PRO_0000440963" description="Cadmium/zinc-transporting ATPase HMA3">
    <location>
        <begin position="1"/>
        <end position="1004"/>
    </location>
</feature>
<feature type="transmembrane region" description="Helical" evidence="1">
    <location>
        <begin position="120"/>
        <end position="140"/>
    </location>
</feature>
<feature type="transmembrane region" description="Helical" evidence="1">
    <location>
        <begin position="144"/>
        <end position="164"/>
    </location>
</feature>
<feature type="transmembrane region" description="Helical" evidence="1">
    <location>
        <begin position="171"/>
        <end position="191"/>
    </location>
</feature>
<feature type="transmembrane region" description="Helical" evidence="1">
    <location>
        <begin position="193"/>
        <end position="213"/>
    </location>
</feature>
<feature type="transmembrane region" description="Helical" evidence="1">
    <location>
        <begin position="340"/>
        <end position="360"/>
    </location>
</feature>
<feature type="transmembrane region" description="Helical" evidence="1">
    <location>
        <begin position="371"/>
        <end position="391"/>
    </location>
</feature>
<feature type="transmembrane region" description="Helical" evidence="1">
    <location>
        <begin position="683"/>
        <end position="703"/>
    </location>
</feature>
<feature type="transmembrane region" description="Helical" evidence="1">
    <location>
        <begin position="707"/>
        <end position="727"/>
    </location>
</feature>
<feature type="domain" description="HMA" evidence="2">
    <location>
        <begin position="42"/>
        <end position="108"/>
    </location>
</feature>
<feature type="region of interest" description="Disordered" evidence="3">
    <location>
        <begin position="931"/>
        <end position="952"/>
    </location>
</feature>
<feature type="mutagenesis site" description="Abolishes HMA3 cadmium transport activity through the tonoplast in root cells." evidence="4">
    <original>R</original>
    <variation>H</variation>
    <location>
        <position position="80"/>
    </location>
</feature>
<feature type="sequence conflict" description="In Ref. 2; BAJ25745." evidence="8" ref="2">
    <original>L</original>
    <variation>F</variation>
    <location>
        <position position="713"/>
    </location>
</feature>
<feature type="sequence conflict" description="In Ref. 2; BAJ25745." evidence="8" ref="2">
    <original>G</original>
    <variation>A</variation>
    <location>
        <position position="853"/>
    </location>
</feature>
<proteinExistence type="evidence at protein level"/>
<accession>Q8H384</accession>
<accession>E3WCP0</accession>
<accession>Q0D7L9</accession>
<sequence>MAGKDEAEGLEARLLLLPPEAAAEEPTRCGGGDGGGGGRKRKKTYLDVLGVCCSAEVALVERLLAPLDGVRVVSVVVASRTVVVEHDPAAAPESAIVKALNKAGLEASVRAYGSSGVVSRWPSPYIVASGVLLTASFFEWLFPPLQCLAVAAVVAGAPPMVRRGFAAASRLSLDINVLMLIAVAGALCLGDYTEAGAIVFLFTTAEWLETLACTKASAGMSSLMGMLPVKAVIATTGEVVSVRDVRVGDVVAVRAGEIVPVDGVVVDGQSEVDERSLTGESFPVPKQPHSEVWAGTMNFDGYIAVRTTALAENSTVAKMERLVEAAQNSRSKTQRLIDSCAKYYTPAVVVVAAGVALIPALLGADGLEQWWKLALVMLVSACPCALVLSTPVASFCAMLRAARMGIFIKGGDVLESLGEIRAVAFDKTGTITRGEFSIDSFHLVGDHKVEMDHLLYWIASIESKSSHPMAAALVEYAQSKSIQPNPENVGDFRIYPGEGIYGEIHGKHIYIGNRRTLARASSPQSTQEMGEMIKGVSIGYVICDGELAGVFSLSDDCRTGAAEAIRELGSLGIKSVMLTGDSSAAATHAQGQLGGVMEELHSELLPEDKVRLVSGLKARFGPTMMVGDGMNDAAALAAADVGVSMGISGSAAAMETSHATLMSSDVLRVPEAVRLGRCARRTIAVNVAGSVAVKAAVLALAAAWRPVLWAAVLADVGTCLLVVLNSMTLLREEWKGGAKEDGACRATARSLVMRSQLAADSQAPNAADAGAAGREQTNGCRCCPKPGMSPEHSVVIDIRADGERQEERPAEAAVVAKCCGGGGGEGIRCGASKKPTATVVVAKCCGGGGGGEGTRCGASKNPATAAVVAKCCSGGGGEGIGCGASKKPTATAVVAKCCGGGGEGTRCAASKKPATAAVVAKCCGGDGGEGTGCGASKRSPPAEGSCSGGEGGTNGVGRCCTSVKRPTCCDMGAAEVSDSSPETAKDCRNGRCCAKTMNSGEVKG</sequence>
<reference key="1">
    <citation type="journal article" date="2010" name="Proc. Natl. Acad. Sci. U.S.A.">
        <title>Gene limiting cadmium accumulation in rice.</title>
        <authorList>
            <person name="Ueno D."/>
            <person name="Yamaji N."/>
            <person name="Kono I."/>
            <person name="Huang C.F."/>
            <person name="Ando T."/>
            <person name="Yano M."/>
            <person name="Ma J.F."/>
        </authorList>
    </citation>
    <scope>NUCLEOTIDE SEQUENCE [MRNA]</scope>
    <scope>FUNCTION</scope>
    <scope>CATALYTIC ACTIVITY</scope>
    <scope>SUBCELLULAR LOCATION</scope>
    <scope>TISSUE SPECIFICITY</scope>
    <scope>POLYMORPHISM</scope>
    <scope>MUTAGENESIS OF ARG-80</scope>
    <source>
        <strain>cv. Nipponbare</strain>
    </source>
</reference>
<reference key="2">
    <citation type="journal article" date="2011" name="New Phytol.">
        <title>OsHMA3, a P1B-type of ATPase affects root-to-shoot cadmium translocation in rice by mediating efflux into vacuoles.</title>
        <authorList>
            <person name="Miyadate H."/>
            <person name="Adachi S."/>
            <person name="Hiraizumi A."/>
            <person name="Tezuka K."/>
            <person name="Nakazawa N."/>
            <person name="Kawamoto T."/>
            <person name="Katou K."/>
            <person name="Kodama I."/>
            <person name="Sakurai K."/>
            <person name="Takahashi H."/>
            <person name="Satoh-Nagasawa N."/>
            <person name="Watanabe A."/>
            <person name="Fujimura T."/>
            <person name="Akagi H."/>
        </authorList>
    </citation>
    <scope>NUCLEOTIDE SEQUENCE [MRNA]</scope>
    <source>
        <strain>cv. Akita 63</strain>
    </source>
</reference>
<reference key="3">
    <citation type="journal article" date="2005" name="Nature">
        <title>The map-based sequence of the rice genome.</title>
        <authorList>
            <consortium name="International rice genome sequencing project (IRGSP)"/>
        </authorList>
    </citation>
    <scope>NUCLEOTIDE SEQUENCE [LARGE SCALE GENOMIC DNA]</scope>
    <source>
        <strain>cv. Nipponbare</strain>
    </source>
</reference>
<reference key="4">
    <citation type="journal article" date="2008" name="Nucleic Acids Res.">
        <title>The rice annotation project database (RAP-DB): 2008 update.</title>
        <authorList>
            <consortium name="The rice annotation project (RAP)"/>
        </authorList>
    </citation>
    <scope>GENOME REANNOTATION</scope>
    <source>
        <strain>cv. Nipponbare</strain>
    </source>
</reference>
<reference key="5">
    <citation type="journal article" date="2013" name="Rice">
        <title>Improvement of the Oryza sativa Nipponbare reference genome using next generation sequence and optical map data.</title>
        <authorList>
            <person name="Kawahara Y."/>
            <person name="de la Bastide M."/>
            <person name="Hamilton J.P."/>
            <person name="Kanamori H."/>
            <person name="McCombie W.R."/>
            <person name="Ouyang S."/>
            <person name="Schwartz D.C."/>
            <person name="Tanaka T."/>
            <person name="Wu J."/>
            <person name="Zhou S."/>
            <person name="Childs K.L."/>
            <person name="Davidson R.M."/>
            <person name="Lin H."/>
            <person name="Quesada-Ocampo L."/>
            <person name="Vaillancourt B."/>
            <person name="Sakai H."/>
            <person name="Lee S.S."/>
            <person name="Kim J."/>
            <person name="Numa H."/>
            <person name="Itoh T."/>
            <person name="Buell C.R."/>
            <person name="Matsumoto T."/>
        </authorList>
    </citation>
    <scope>GENOME REANNOTATION</scope>
    <source>
        <strain>cv. Nipponbare</strain>
    </source>
</reference>
<reference key="6">
    <citation type="journal article" date="2014" name="J. Exp. Bot.">
        <title>Overexpression of OsHMA3 enhances Cd tolerance and expression of Zn transporter genes in rice.</title>
        <authorList>
            <person name="Sasaki A."/>
            <person name="Yamaji N."/>
            <person name="Ma J.F."/>
        </authorList>
    </citation>
    <scope>FUNCTION</scope>
    <scope>BIOTECHNOLOGY</scope>
</reference>
<dbReference type="EC" id="7.2.2.12" evidence="9"/>
<dbReference type="EC" id="7.2.2.21" evidence="4"/>
<dbReference type="EMBL" id="AB557931">
    <property type="protein sequence ID" value="BAJ23048.1"/>
    <property type="molecule type" value="mRNA"/>
</dbReference>
<dbReference type="EMBL" id="AB559519">
    <property type="protein sequence ID" value="BAJ25742.1"/>
    <property type="molecule type" value="mRNA"/>
</dbReference>
<dbReference type="EMBL" id="AB559522">
    <property type="protein sequence ID" value="BAJ25745.1"/>
    <property type="molecule type" value="Genomic_DNA"/>
</dbReference>
<dbReference type="EMBL" id="AP005246">
    <property type="protein sequence ID" value="BAC21509.1"/>
    <property type="molecule type" value="Genomic_DNA"/>
</dbReference>
<dbReference type="EMBL" id="AP008213">
    <property type="protein sequence ID" value="BAF21154.2"/>
    <property type="molecule type" value="Genomic_DNA"/>
</dbReference>
<dbReference type="EMBL" id="AP014963">
    <property type="protein sequence ID" value="BAT00724.1"/>
    <property type="molecule type" value="Genomic_DNA"/>
</dbReference>
<dbReference type="SMR" id="Q8H384"/>
<dbReference type="FunCoup" id="Q8H384">
    <property type="interactions" value="4"/>
</dbReference>
<dbReference type="STRING" id="39947.Q8H384"/>
<dbReference type="TCDB" id="3.A.3.6.17">
    <property type="family name" value="the p-type atpase (p-atpase) superfamily"/>
</dbReference>
<dbReference type="PaxDb" id="39947-Q8H384"/>
<dbReference type="EnsemblPlants" id="Os07t0232900-01">
    <property type="protein sequence ID" value="Os07t0232900-01"/>
    <property type="gene ID" value="Os07g0232900"/>
</dbReference>
<dbReference type="GeneID" id="4342783"/>
<dbReference type="Gramene" id="Os07t0232900-01">
    <property type="protein sequence ID" value="Os07t0232900-01"/>
    <property type="gene ID" value="Os07g0232900"/>
</dbReference>
<dbReference type="KEGG" id="dosa:Os07g0232900"/>
<dbReference type="KEGG" id="osa:4342783"/>
<dbReference type="eggNOG" id="KOG0207">
    <property type="taxonomic scope" value="Eukaryota"/>
</dbReference>
<dbReference type="HOGENOM" id="CLU_001771_6_1_1"/>
<dbReference type="InParanoid" id="Q8H384"/>
<dbReference type="OMA" id="LDCSNCA"/>
<dbReference type="OrthoDB" id="432719at2759"/>
<dbReference type="BRENDA" id="7.2.2.2">
    <property type="organism ID" value="4460"/>
</dbReference>
<dbReference type="Proteomes" id="UP000000763">
    <property type="component" value="Chromosome 7"/>
</dbReference>
<dbReference type="Proteomes" id="UP000059680">
    <property type="component" value="Chromosome 7"/>
</dbReference>
<dbReference type="GO" id="GO:0016020">
    <property type="term" value="C:membrane"/>
    <property type="evidence" value="ECO:0000318"/>
    <property type="project" value="GO_Central"/>
</dbReference>
<dbReference type="GO" id="GO:0005774">
    <property type="term" value="C:vacuolar membrane"/>
    <property type="evidence" value="ECO:0007669"/>
    <property type="project" value="UniProtKB-SubCell"/>
</dbReference>
<dbReference type="GO" id="GO:0005524">
    <property type="term" value="F:ATP binding"/>
    <property type="evidence" value="ECO:0007669"/>
    <property type="project" value="UniProtKB-KW"/>
</dbReference>
<dbReference type="GO" id="GO:0016887">
    <property type="term" value="F:ATP hydrolysis activity"/>
    <property type="evidence" value="ECO:0007669"/>
    <property type="project" value="InterPro"/>
</dbReference>
<dbReference type="GO" id="GO:0046872">
    <property type="term" value="F:metal ion binding"/>
    <property type="evidence" value="ECO:0007669"/>
    <property type="project" value="UniProtKB-KW"/>
</dbReference>
<dbReference type="GO" id="GO:0008551">
    <property type="term" value="F:P-type cadmium transporter activity"/>
    <property type="evidence" value="ECO:0007669"/>
    <property type="project" value="UniProtKB-EC"/>
</dbReference>
<dbReference type="GO" id="GO:0016463">
    <property type="term" value="F:P-type zinc transporter activity"/>
    <property type="evidence" value="ECO:0007669"/>
    <property type="project" value="UniProtKB-EC"/>
</dbReference>
<dbReference type="GO" id="GO:0022857">
    <property type="term" value="F:transmembrane transporter activity"/>
    <property type="evidence" value="ECO:0000318"/>
    <property type="project" value="GO_Central"/>
</dbReference>
<dbReference type="GO" id="GO:0055085">
    <property type="term" value="P:transmembrane transport"/>
    <property type="evidence" value="ECO:0000318"/>
    <property type="project" value="GO_Central"/>
</dbReference>
<dbReference type="FunFam" id="2.70.150.10:FF:000002">
    <property type="entry name" value="Copper-transporting ATPase 1, putative"/>
    <property type="match status" value="1"/>
</dbReference>
<dbReference type="FunFam" id="3.30.70.100:FF:000022">
    <property type="entry name" value="Putative cadmium/zinc-transporting ATPase 3"/>
    <property type="match status" value="1"/>
</dbReference>
<dbReference type="FunFam" id="3.40.1110.10:FF:000043">
    <property type="entry name" value="Putative cadmium/zinc-transporting ATPase 3"/>
    <property type="match status" value="1"/>
</dbReference>
<dbReference type="Gene3D" id="3.30.70.100">
    <property type="match status" value="1"/>
</dbReference>
<dbReference type="Gene3D" id="3.40.1110.10">
    <property type="entry name" value="Calcium-transporting ATPase, cytoplasmic domain N"/>
    <property type="match status" value="1"/>
</dbReference>
<dbReference type="Gene3D" id="2.70.150.10">
    <property type="entry name" value="Calcium-transporting ATPase, cytoplasmic transduction domain A"/>
    <property type="match status" value="1"/>
</dbReference>
<dbReference type="Gene3D" id="3.40.50.1000">
    <property type="entry name" value="HAD superfamily/HAD-like"/>
    <property type="match status" value="1"/>
</dbReference>
<dbReference type="InterPro" id="IPR023299">
    <property type="entry name" value="ATPase_P-typ_cyto_dom_N"/>
</dbReference>
<dbReference type="InterPro" id="IPR018303">
    <property type="entry name" value="ATPase_P-typ_P_site"/>
</dbReference>
<dbReference type="InterPro" id="IPR023298">
    <property type="entry name" value="ATPase_P-typ_TM_dom_sf"/>
</dbReference>
<dbReference type="InterPro" id="IPR008250">
    <property type="entry name" value="ATPase_P-typ_transduc_dom_A_sf"/>
</dbReference>
<dbReference type="InterPro" id="IPR051014">
    <property type="entry name" value="Cation_Transport_ATPase_IB"/>
</dbReference>
<dbReference type="InterPro" id="IPR036412">
    <property type="entry name" value="HAD-like_sf"/>
</dbReference>
<dbReference type="InterPro" id="IPR023214">
    <property type="entry name" value="HAD_sf"/>
</dbReference>
<dbReference type="InterPro" id="IPR006121">
    <property type="entry name" value="HMA_dom"/>
</dbReference>
<dbReference type="InterPro" id="IPR036163">
    <property type="entry name" value="HMA_dom_sf"/>
</dbReference>
<dbReference type="InterPro" id="IPR027256">
    <property type="entry name" value="P-typ_ATPase_IB"/>
</dbReference>
<dbReference type="InterPro" id="IPR001757">
    <property type="entry name" value="P_typ_ATPase"/>
</dbReference>
<dbReference type="InterPro" id="IPR044492">
    <property type="entry name" value="P_typ_ATPase_HD_dom"/>
</dbReference>
<dbReference type="NCBIfam" id="TIGR01512">
    <property type="entry name" value="ATPase-IB2_Cd"/>
    <property type="match status" value="1"/>
</dbReference>
<dbReference type="NCBIfam" id="TIGR01525">
    <property type="entry name" value="ATPase-IB_hvy"/>
    <property type="match status" value="1"/>
</dbReference>
<dbReference type="NCBIfam" id="TIGR01494">
    <property type="entry name" value="ATPase_P-type"/>
    <property type="match status" value="1"/>
</dbReference>
<dbReference type="PANTHER" id="PTHR48085">
    <property type="entry name" value="CADMIUM/ZINC-TRANSPORTING ATPASE HMA2-RELATED"/>
    <property type="match status" value="1"/>
</dbReference>
<dbReference type="PANTHER" id="PTHR48085:SF8">
    <property type="entry name" value="CADMIUM_ZINC-TRANSPORTING ATPASE HMA3"/>
    <property type="match status" value="1"/>
</dbReference>
<dbReference type="Pfam" id="PF00122">
    <property type="entry name" value="E1-E2_ATPase"/>
    <property type="match status" value="1"/>
</dbReference>
<dbReference type="Pfam" id="PF00403">
    <property type="entry name" value="HMA"/>
    <property type="match status" value="1"/>
</dbReference>
<dbReference type="Pfam" id="PF00702">
    <property type="entry name" value="Hydrolase"/>
    <property type="match status" value="1"/>
</dbReference>
<dbReference type="PRINTS" id="PR00119">
    <property type="entry name" value="CATATPASE"/>
</dbReference>
<dbReference type="SFLD" id="SFLDG00002">
    <property type="entry name" value="C1.7:_P-type_atpase_like"/>
    <property type="match status" value="1"/>
</dbReference>
<dbReference type="SFLD" id="SFLDF00027">
    <property type="entry name" value="p-type_atpase"/>
    <property type="match status" value="1"/>
</dbReference>
<dbReference type="SUPFAM" id="SSF81653">
    <property type="entry name" value="Calcium ATPase, transduction domain A"/>
    <property type="match status" value="1"/>
</dbReference>
<dbReference type="SUPFAM" id="SSF81665">
    <property type="entry name" value="Calcium ATPase, transmembrane domain M"/>
    <property type="match status" value="1"/>
</dbReference>
<dbReference type="SUPFAM" id="SSF56784">
    <property type="entry name" value="HAD-like"/>
    <property type="match status" value="1"/>
</dbReference>
<dbReference type="SUPFAM" id="SSF55008">
    <property type="entry name" value="HMA, heavy metal-associated domain"/>
    <property type="match status" value="1"/>
</dbReference>
<dbReference type="PROSITE" id="PS00154">
    <property type="entry name" value="ATPASE_E1_E2"/>
    <property type="match status" value="1"/>
</dbReference>
<dbReference type="PROSITE" id="PS50846">
    <property type="entry name" value="HMA_2"/>
    <property type="match status" value="1"/>
</dbReference>
<name>HMA3_ORYSJ</name>
<gene>
    <name evidence="7" type="primary">HMA3</name>
    <name type="synonym">CASTLE1n</name>
    <name evidence="11" type="ordered locus">Os07g0232900</name>
    <name evidence="8" type="ordered locus">LOC_Os07g12900</name>
    <name evidence="10" type="ORF">OSJNBa0061L20.105</name>
</gene>
<organism>
    <name type="scientific">Oryza sativa subsp. japonica</name>
    <name type="common">Rice</name>
    <dbReference type="NCBI Taxonomy" id="39947"/>
    <lineage>
        <taxon>Eukaryota</taxon>
        <taxon>Viridiplantae</taxon>
        <taxon>Streptophyta</taxon>
        <taxon>Embryophyta</taxon>
        <taxon>Tracheophyta</taxon>
        <taxon>Spermatophyta</taxon>
        <taxon>Magnoliopsida</taxon>
        <taxon>Liliopsida</taxon>
        <taxon>Poales</taxon>
        <taxon>Poaceae</taxon>
        <taxon>BOP clade</taxon>
        <taxon>Oryzoideae</taxon>
        <taxon>Oryzeae</taxon>
        <taxon>Oryzinae</taxon>
        <taxon>Oryza</taxon>
        <taxon>Oryza sativa</taxon>
    </lineage>
</organism>
<comment type="function">
    <text evidence="4 5 6">Root-specific cadmium (Cd) transporter that mediates Cd efflux in root vacuoles. Involved in Cd detoxification by sequestrating Cd into root vacuoles and limiting translocation of Cd from the roots to the shoots, and accumulation in grains.</text>
</comment>
<comment type="catalytic activity">
    <reaction evidence="9">
        <text>Zn(2+)(in) + ATP + H2O = Zn(2+)(out) + ADP + phosphate + H(+)</text>
        <dbReference type="Rhea" id="RHEA:20621"/>
        <dbReference type="ChEBI" id="CHEBI:15377"/>
        <dbReference type="ChEBI" id="CHEBI:15378"/>
        <dbReference type="ChEBI" id="CHEBI:29105"/>
        <dbReference type="ChEBI" id="CHEBI:30616"/>
        <dbReference type="ChEBI" id="CHEBI:43474"/>
        <dbReference type="ChEBI" id="CHEBI:456216"/>
        <dbReference type="EC" id="7.2.2.12"/>
    </reaction>
</comment>
<comment type="catalytic activity">
    <reaction evidence="4">
        <text>Cd(2+)(in) + ATP + H2O = Cd(2+)(out) + ADP + phosphate + H(+)</text>
        <dbReference type="Rhea" id="RHEA:12132"/>
        <dbReference type="ChEBI" id="CHEBI:15377"/>
        <dbReference type="ChEBI" id="CHEBI:15378"/>
        <dbReference type="ChEBI" id="CHEBI:30616"/>
        <dbReference type="ChEBI" id="CHEBI:43474"/>
        <dbReference type="ChEBI" id="CHEBI:48775"/>
        <dbReference type="ChEBI" id="CHEBI:456216"/>
        <dbReference type="EC" id="7.2.2.21"/>
    </reaction>
</comment>
<comment type="subcellular location">
    <subcellularLocation>
        <location evidence="4 5">Vacuole membrane</location>
        <topology evidence="1">Multi-pass membrane protein</topology>
    </subcellularLocation>
    <text evidence="4 5">Localizes to the tonoplast of root cells.</text>
</comment>
<comment type="tissue specificity">
    <text evidence="4 5">Specifically expressed in roots.</text>
</comment>
<comment type="polymorphism">
    <text evidence="4">A single amino acid substitution of Arg-80 to His abolishes HMA3 cadmium transport activity through the tonoplast in root cells. This allele is found in a number of rice cultivars, and is associated with high accumulation of cadmium in rice grains. Identification of natural allelic variation in HMA3 may facilitate the development of rice varieties with grain cadmium concentrations adapted to dietary needs in function of the cadmium concentration in soil.</text>
</comment>
<comment type="biotechnology">
    <text evidence="6">Over-expression of HMA3 allows to reduce efficiently cadmium accumulation in the grain and to enhance cadmium tolerance in rice.</text>
</comment>
<comment type="similarity">
    <text evidence="8">Belongs to the cation transport ATPase (P-type) (TC 3.A.3) family. Type IB subfamily.</text>
</comment>
<evidence type="ECO:0000255" key="1"/>
<evidence type="ECO:0000255" key="2">
    <source>
        <dbReference type="PROSITE-ProRule" id="PRU00280"/>
    </source>
</evidence>
<evidence type="ECO:0000256" key="3">
    <source>
        <dbReference type="SAM" id="MobiDB-lite"/>
    </source>
</evidence>
<evidence type="ECO:0000269" key="4">
    <source>
    </source>
</evidence>
<evidence type="ECO:0000269" key="5">
    <source>
    </source>
</evidence>
<evidence type="ECO:0000269" key="6">
    <source>
    </source>
</evidence>
<evidence type="ECO:0000303" key="7">
    <source>
    </source>
</evidence>
<evidence type="ECO:0000305" key="8"/>
<evidence type="ECO:0000305" key="9">
    <source>
    </source>
</evidence>
<evidence type="ECO:0000312" key="10">
    <source>
        <dbReference type="EMBL" id="BAC21509.1"/>
    </source>
</evidence>
<evidence type="ECO:0000312" key="11">
    <source>
        <dbReference type="EMBL" id="BAF21154.2"/>
    </source>
</evidence>
<keyword id="KW-0067">ATP-binding</keyword>
<keyword id="KW-0104">Cadmium</keyword>
<keyword id="KW-0406">Ion transport</keyword>
<keyword id="KW-0472">Membrane</keyword>
<keyword id="KW-0479">Metal-binding</keyword>
<keyword id="KW-0547">Nucleotide-binding</keyword>
<keyword id="KW-1185">Reference proteome</keyword>
<keyword id="KW-1278">Translocase</keyword>
<keyword id="KW-0812">Transmembrane</keyword>
<keyword id="KW-1133">Transmembrane helix</keyword>
<keyword id="KW-0813">Transport</keyword>
<keyword id="KW-0926">Vacuole</keyword>
<keyword id="KW-0862">Zinc</keyword>
<protein>
    <recommendedName>
        <fullName evidence="8">Cadmium/zinc-transporting ATPase HMA3</fullName>
        <ecNumber evidence="9">7.2.2.12</ecNumber>
        <ecNumber evidence="4">7.2.2.21</ecNumber>
    </recommendedName>
    <alternativeName>
        <fullName evidence="8">Protein HEAVY METAL ATPASE 3</fullName>
        <shortName evidence="7">OsHMA3</shortName>
    </alternativeName>
</protein>